<feature type="chain" id="PRO_0000050952" description="Ciliary WD repeat-containing protein ctxp80">
    <location>
        <begin position="1"/>
        <end position="716"/>
    </location>
</feature>
<feature type="repeat" description="WD 1">
    <location>
        <begin position="167"/>
        <end position="208"/>
    </location>
</feature>
<feature type="repeat" description="WD 2">
    <location>
        <begin position="213"/>
        <end position="254"/>
    </location>
</feature>
<feature type="repeat" description="WD 3">
    <location>
        <begin position="257"/>
        <end position="297"/>
    </location>
</feature>
<feature type="repeat" description="WD 4">
    <location>
        <begin position="305"/>
        <end position="343"/>
    </location>
</feature>
<feature type="repeat" description="WD 5">
    <location>
        <begin position="345"/>
        <end position="382"/>
    </location>
</feature>
<feature type="repeat" description="WD 6">
    <location>
        <begin position="424"/>
        <end position="462"/>
    </location>
</feature>
<feature type="repeat" description="WD 7">
    <location>
        <begin position="529"/>
        <end position="568"/>
    </location>
</feature>
<feature type="repeat" description="WD 8">
    <location>
        <begin position="571"/>
        <end position="610"/>
    </location>
</feature>
<feature type="repeat" description="WD 9">
    <location>
        <begin position="639"/>
        <end position="678"/>
    </location>
</feature>
<feature type="repeat" description="WD 10">
    <location>
        <begin position="683"/>
        <end position="715"/>
    </location>
</feature>
<feature type="region of interest" description="Disordered" evidence="1">
    <location>
        <begin position="1"/>
        <end position="53"/>
    </location>
</feature>
<feature type="compositionally biased region" description="Polar residues" evidence="1">
    <location>
        <begin position="8"/>
        <end position="21"/>
    </location>
</feature>
<feature type="compositionally biased region" description="Basic and acidic residues" evidence="1">
    <location>
        <begin position="23"/>
        <end position="53"/>
    </location>
</feature>
<protein>
    <recommendedName>
        <fullName>Ciliary WD repeat-containing protein ctxp80</fullName>
    </recommendedName>
</protein>
<reference key="1">
    <citation type="submission" date="1999-12" db="EMBL/GenBank/DDBJ databases">
        <title>Identification and molecular characterization of a ciliary WD-repeat protein in the ciliate Euplotes octocarinatus.</title>
        <authorList>
            <person name="Pluemper E."/>
            <person name="Heckmann K."/>
        </authorList>
    </citation>
    <scope>NUCLEOTIDE SEQUENCE [GENOMIC DNA]</scope>
</reference>
<evidence type="ECO:0000256" key="1">
    <source>
        <dbReference type="SAM" id="MobiDB-lite"/>
    </source>
</evidence>
<evidence type="ECO:0000305" key="2"/>
<comment type="similarity">
    <text evidence="2">Belongs to the WD repeat EMAP family.</text>
</comment>
<organism>
    <name type="scientific">Euplotoides octocarinatus</name>
    <name type="common">Freshwater ciliate</name>
    <name type="synonym">Euplotes octocarinatus</name>
    <dbReference type="NCBI Taxonomy" id="2716877"/>
    <lineage>
        <taxon>Eukaryota</taxon>
        <taxon>Sar</taxon>
        <taxon>Alveolata</taxon>
        <taxon>Ciliophora</taxon>
        <taxon>Intramacronucleata</taxon>
        <taxon>Spirotrichea</taxon>
        <taxon>Hypotrichia</taxon>
        <taxon>Euplotida</taxon>
        <taxon>Euplotidae</taxon>
        <taxon>Euplotes</taxon>
    </lineage>
</organism>
<keyword id="KW-0677">Repeat</keyword>
<keyword id="KW-0853">WD repeat</keyword>
<accession>Q9N9X3</accession>
<name>CTX80_EUPOC</name>
<proteinExistence type="inferred from homology"/>
<sequence length="716" mass="77564">MGCGGSSGASDPSSEKINWNNAEIHDEFKQEQKKAGAKRKAFDKTTGKAVEKERTAADREFDFFEGADAGSGEQFMAVRPYEGAIVEPAQHNEPSKDAPDVTYDLEYVYGYRAEDSRMNCFYNKNGNVCYFTAALGVVLDQDKNTQKFFGGGQTDNTSKMVARDDMYHTNDITAMDMSNCRTLCATGQNGSVPVAFVWDAATGAKKGRYKLDKGGREVTAIAIDPKKKYVAICANDNDHQLYIFDIDKGTQVKKDKSGPDRIFHMAWSLKDGDSVVATAGEKHFAIWNLGADSFKKKKGIYGDKGKPTSHSCVCWDDAGNAYSGGANSSIYVWSGQNLTSTYDVHGKGFVGAIRWCDGKIISGGKDGQIIISNPADGKAEKTIDVGELVRSVDMKGGKIVAGLRNGTILEIDSKGTKKEIMKSHSDGEAWGLAVADKDTFVTSGDDNKIYVWDLKNRKSTALAEICNEDKNSKAGGASSLTEYAPSKCGRSVAVNVGGNGNVAVGHNDGRVTIRGGVKSIDKVTKTLTDSGEWIECMAYSPDGSMLAVGSHDNNIYIYSSADYSKLGTLKAHNSFIVSLDWSSDGTYIRSVCGAHELLFFTVEDFKQDPSGATNTVETTWHTNSAKYGWLVSGIFPAGTDGTHINHVDFSSSGSLIVTADDYGLVNVWRNPARAGATPVSLRGHSEHVVRTYFTQGESYILSIGGYDKTIMQWKKK</sequence>
<dbReference type="EMBL" id="AJ251505">
    <property type="protein sequence ID" value="CAB96210.1"/>
    <property type="molecule type" value="Genomic_DNA"/>
</dbReference>
<dbReference type="SMR" id="Q9N9X3"/>
<dbReference type="GO" id="GO:0008017">
    <property type="term" value="F:microtubule binding"/>
    <property type="evidence" value="ECO:0007669"/>
    <property type="project" value="TreeGrafter"/>
</dbReference>
<dbReference type="Gene3D" id="2.130.10.10">
    <property type="entry name" value="YVTN repeat-like/Quinoprotein amine dehydrogenase"/>
    <property type="match status" value="2"/>
</dbReference>
<dbReference type="InterPro" id="IPR055442">
    <property type="entry name" value="Beta-prop_EML-like_2nd"/>
</dbReference>
<dbReference type="InterPro" id="IPR055439">
    <property type="entry name" value="Beta-prop_EML_1st"/>
</dbReference>
<dbReference type="InterPro" id="IPR005108">
    <property type="entry name" value="HELP"/>
</dbReference>
<dbReference type="InterPro" id="IPR011047">
    <property type="entry name" value="Quinoprotein_ADH-like_sf"/>
</dbReference>
<dbReference type="InterPro" id="IPR015943">
    <property type="entry name" value="WD40/YVTN_repeat-like_dom_sf"/>
</dbReference>
<dbReference type="InterPro" id="IPR036322">
    <property type="entry name" value="WD40_repeat_dom_sf"/>
</dbReference>
<dbReference type="InterPro" id="IPR001680">
    <property type="entry name" value="WD40_rpt"/>
</dbReference>
<dbReference type="InterPro" id="IPR050630">
    <property type="entry name" value="WD_repeat_EMAP"/>
</dbReference>
<dbReference type="PANTHER" id="PTHR13720:SF33">
    <property type="entry name" value="HELP DOMAIN-CONTAINING PROTEIN"/>
    <property type="match status" value="1"/>
</dbReference>
<dbReference type="PANTHER" id="PTHR13720">
    <property type="entry name" value="WD-40 REPEAT PROTEIN"/>
    <property type="match status" value="1"/>
</dbReference>
<dbReference type="Pfam" id="PF23409">
    <property type="entry name" value="Beta-prop_EML"/>
    <property type="match status" value="1"/>
</dbReference>
<dbReference type="Pfam" id="PF23414">
    <property type="entry name" value="Beta-prop_EML_2"/>
    <property type="match status" value="1"/>
</dbReference>
<dbReference type="Pfam" id="PF03451">
    <property type="entry name" value="HELP"/>
    <property type="match status" value="1"/>
</dbReference>
<dbReference type="SMART" id="SM00320">
    <property type="entry name" value="WD40"/>
    <property type="match status" value="10"/>
</dbReference>
<dbReference type="SUPFAM" id="SSF50998">
    <property type="entry name" value="Quinoprotein alcohol dehydrogenase-like"/>
    <property type="match status" value="1"/>
</dbReference>
<dbReference type="SUPFAM" id="SSF50978">
    <property type="entry name" value="WD40 repeat-like"/>
    <property type="match status" value="1"/>
</dbReference>
<dbReference type="PROSITE" id="PS50082">
    <property type="entry name" value="WD_REPEATS_2"/>
    <property type="match status" value="2"/>
</dbReference>
<dbReference type="PROSITE" id="PS50294">
    <property type="entry name" value="WD_REPEATS_REGION"/>
    <property type="match status" value="1"/>
</dbReference>